<keyword id="KW-0963">Cytoplasm</keyword>
<keyword id="KW-0275">Fatty acid biosynthesis</keyword>
<keyword id="KW-0276">Fatty acid metabolism</keyword>
<keyword id="KW-0413">Isomerase</keyword>
<keyword id="KW-0444">Lipid biosynthesis</keyword>
<keyword id="KW-0443">Lipid metabolism</keyword>
<keyword id="KW-0456">Lyase</keyword>
<keyword id="KW-1185">Reference proteome</keyword>
<evidence type="ECO:0000255" key="1">
    <source>
        <dbReference type="HAMAP-Rule" id="MF_00405"/>
    </source>
</evidence>
<feature type="chain" id="PRO_1000201169" description="3-hydroxydecanoyl-[acyl-carrier-protein] dehydratase">
    <location>
        <begin position="1"/>
        <end position="171"/>
    </location>
</feature>
<feature type="active site" evidence="1">
    <location>
        <position position="71"/>
    </location>
</feature>
<name>FABA_AGRFC</name>
<organism>
    <name type="scientific">Agrobacterium fabrum (strain C58 / ATCC 33970)</name>
    <name type="common">Agrobacterium tumefaciens (strain C58)</name>
    <dbReference type="NCBI Taxonomy" id="176299"/>
    <lineage>
        <taxon>Bacteria</taxon>
        <taxon>Pseudomonadati</taxon>
        <taxon>Pseudomonadota</taxon>
        <taxon>Alphaproteobacteria</taxon>
        <taxon>Hyphomicrobiales</taxon>
        <taxon>Rhizobiaceae</taxon>
        <taxon>Rhizobium/Agrobacterium group</taxon>
        <taxon>Agrobacterium</taxon>
        <taxon>Agrobacterium tumefaciens complex</taxon>
    </lineage>
</organism>
<gene>
    <name evidence="1" type="primary">fabA</name>
    <name type="ordered locus">Atu0151</name>
    <name type="ORF">AGR_C_246</name>
</gene>
<accession>Q7D235</accession>
<comment type="function">
    <text evidence="1">Necessary for the introduction of cis unsaturation into fatty acids. Catalyzes the dehydration of (3R)-3-hydroxydecanoyl-ACP to E-(2)-decenoyl-ACP and then its isomerization to Z-(3)-decenoyl-ACP. Can catalyze the dehydratase reaction for beta-hydroxyacyl-ACPs with saturated chain lengths up to 16:0, being most active on intermediate chain length.</text>
</comment>
<comment type="catalytic activity">
    <reaction evidence="1">
        <text>a (3R)-hydroxyacyl-[ACP] = a (2E)-enoyl-[ACP] + H2O</text>
        <dbReference type="Rhea" id="RHEA:13097"/>
        <dbReference type="Rhea" id="RHEA-COMP:9925"/>
        <dbReference type="Rhea" id="RHEA-COMP:9945"/>
        <dbReference type="ChEBI" id="CHEBI:15377"/>
        <dbReference type="ChEBI" id="CHEBI:78784"/>
        <dbReference type="ChEBI" id="CHEBI:78827"/>
        <dbReference type="EC" id="4.2.1.59"/>
    </reaction>
</comment>
<comment type="catalytic activity">
    <reaction evidence="1">
        <text>(3R)-hydroxydecanoyl-[ACP] = (2E)-decenoyl-[ACP] + H2O</text>
        <dbReference type="Rhea" id="RHEA:41860"/>
        <dbReference type="Rhea" id="RHEA-COMP:9638"/>
        <dbReference type="Rhea" id="RHEA-COMP:9639"/>
        <dbReference type="ChEBI" id="CHEBI:15377"/>
        <dbReference type="ChEBI" id="CHEBI:78466"/>
        <dbReference type="ChEBI" id="CHEBI:78467"/>
    </reaction>
</comment>
<comment type="catalytic activity">
    <reaction evidence="1">
        <text>(2E)-decenoyl-[ACP] = (3Z)-decenoyl-[ACP]</text>
        <dbReference type="Rhea" id="RHEA:23568"/>
        <dbReference type="Rhea" id="RHEA-COMP:9639"/>
        <dbReference type="Rhea" id="RHEA-COMP:9927"/>
        <dbReference type="ChEBI" id="CHEBI:78467"/>
        <dbReference type="ChEBI" id="CHEBI:78798"/>
        <dbReference type="EC" id="5.3.3.14"/>
    </reaction>
</comment>
<comment type="pathway">
    <text evidence="1">Lipid metabolism; fatty acid biosynthesis.</text>
</comment>
<comment type="subunit">
    <text evidence="1">Homodimer.</text>
</comment>
<comment type="subcellular location">
    <subcellularLocation>
        <location evidence="1">Cytoplasm</location>
    </subcellularLocation>
</comment>
<comment type="similarity">
    <text evidence="1">Belongs to the thioester dehydratase family. FabA subfamily.</text>
</comment>
<proteinExistence type="inferred from homology"/>
<protein>
    <recommendedName>
        <fullName evidence="1">3-hydroxydecanoyl-[acyl-carrier-protein] dehydratase</fullName>
        <ecNumber evidence="1">4.2.1.59</ecNumber>
    </recommendedName>
    <alternativeName>
        <fullName evidence="1">3-hydroxyacyl-[acyl-carrier-protein] dehydratase FabA</fullName>
    </alternativeName>
    <alternativeName>
        <fullName evidence="1">Beta-hydroxydecanoyl thioester dehydrase</fullName>
    </alternativeName>
    <alternativeName>
        <fullName evidence="1">Trans-2-decenoyl-[acyl-carrier-protein] isomerase</fullName>
        <ecNumber evidence="1">5.3.3.14</ecNumber>
    </alternativeName>
</protein>
<dbReference type="EC" id="4.2.1.59" evidence="1"/>
<dbReference type="EC" id="5.3.3.14" evidence="1"/>
<dbReference type="EMBL" id="AE007869">
    <property type="protein sequence ID" value="AAK85972.2"/>
    <property type="molecule type" value="Genomic_DNA"/>
</dbReference>
<dbReference type="RefSeq" id="NP_353187.2">
    <property type="nucleotide sequence ID" value="NC_003062.2"/>
</dbReference>
<dbReference type="RefSeq" id="WP_006309974.1">
    <property type="nucleotide sequence ID" value="NC_003062.2"/>
</dbReference>
<dbReference type="SMR" id="Q7D235"/>
<dbReference type="STRING" id="176299.Atu0151"/>
<dbReference type="EnsemblBacteria" id="AAK85972">
    <property type="protein sequence ID" value="AAK85972"/>
    <property type="gene ID" value="Atu0151"/>
</dbReference>
<dbReference type="GeneID" id="1132189"/>
<dbReference type="KEGG" id="atu:Atu0151"/>
<dbReference type="PATRIC" id="fig|176299.10.peg.142"/>
<dbReference type="eggNOG" id="COG0764">
    <property type="taxonomic scope" value="Bacteria"/>
</dbReference>
<dbReference type="HOGENOM" id="CLU_097925_0_0_5"/>
<dbReference type="OrthoDB" id="9786735at2"/>
<dbReference type="PhylomeDB" id="Q7D235"/>
<dbReference type="BioCyc" id="AGRO:ATU0151-MONOMER"/>
<dbReference type="BioCyc" id="MetaCyc:ATU0151-MONOMER"/>
<dbReference type="UniPathway" id="UPA00094"/>
<dbReference type="Proteomes" id="UP000000813">
    <property type="component" value="Chromosome circular"/>
</dbReference>
<dbReference type="GO" id="GO:0005737">
    <property type="term" value="C:cytoplasm"/>
    <property type="evidence" value="ECO:0007669"/>
    <property type="project" value="UniProtKB-SubCell"/>
</dbReference>
<dbReference type="GO" id="GO:0019171">
    <property type="term" value="F:(3R)-hydroxyacyl-[acyl-carrier-protein] dehydratase activity"/>
    <property type="evidence" value="ECO:0007669"/>
    <property type="project" value="UniProtKB-UniRule"/>
</dbReference>
<dbReference type="GO" id="GO:0034017">
    <property type="term" value="F:trans-2-decenoyl-acyl-carrier-protein isomerase activity"/>
    <property type="evidence" value="ECO:0007669"/>
    <property type="project" value="UniProtKB-UniRule"/>
</dbReference>
<dbReference type="GO" id="GO:0006636">
    <property type="term" value="P:unsaturated fatty acid biosynthetic process"/>
    <property type="evidence" value="ECO:0007669"/>
    <property type="project" value="UniProtKB-UniRule"/>
</dbReference>
<dbReference type="CDD" id="cd01287">
    <property type="entry name" value="FabA"/>
    <property type="match status" value="1"/>
</dbReference>
<dbReference type="Gene3D" id="3.10.129.10">
    <property type="entry name" value="Hotdog Thioesterase"/>
    <property type="match status" value="1"/>
</dbReference>
<dbReference type="HAMAP" id="MF_00405">
    <property type="entry name" value="FabA"/>
    <property type="match status" value="1"/>
</dbReference>
<dbReference type="InterPro" id="IPR010083">
    <property type="entry name" value="FabA"/>
</dbReference>
<dbReference type="InterPro" id="IPR013114">
    <property type="entry name" value="FabA_FabZ"/>
</dbReference>
<dbReference type="InterPro" id="IPR029069">
    <property type="entry name" value="HotDog_dom_sf"/>
</dbReference>
<dbReference type="NCBIfam" id="TIGR01749">
    <property type="entry name" value="fabA"/>
    <property type="match status" value="1"/>
</dbReference>
<dbReference type="NCBIfam" id="NF003509">
    <property type="entry name" value="PRK05174.1"/>
    <property type="match status" value="1"/>
</dbReference>
<dbReference type="PANTHER" id="PTHR30272">
    <property type="entry name" value="3-HYDROXYACYL-[ACYL-CARRIER-PROTEIN] DEHYDRATASE"/>
    <property type="match status" value="1"/>
</dbReference>
<dbReference type="PANTHER" id="PTHR30272:SF8">
    <property type="entry name" value="3-HYDROXYDECANOYL-[ACYL-CARRIER-PROTEIN] DEHYDRATASE"/>
    <property type="match status" value="1"/>
</dbReference>
<dbReference type="Pfam" id="PF07977">
    <property type="entry name" value="FabA"/>
    <property type="match status" value="1"/>
</dbReference>
<dbReference type="SUPFAM" id="SSF54637">
    <property type="entry name" value="Thioesterase/thiol ester dehydrase-isomerase"/>
    <property type="match status" value="1"/>
</dbReference>
<reference key="1">
    <citation type="journal article" date="2001" name="Science">
        <title>The genome of the natural genetic engineer Agrobacterium tumefaciens C58.</title>
        <authorList>
            <person name="Wood D.W."/>
            <person name="Setubal J.C."/>
            <person name="Kaul R."/>
            <person name="Monks D.E."/>
            <person name="Kitajima J.P."/>
            <person name="Okura V.K."/>
            <person name="Zhou Y."/>
            <person name="Chen L."/>
            <person name="Wood G.E."/>
            <person name="Almeida N.F. Jr."/>
            <person name="Woo L."/>
            <person name="Chen Y."/>
            <person name="Paulsen I.T."/>
            <person name="Eisen J.A."/>
            <person name="Karp P.D."/>
            <person name="Bovee D. Sr."/>
            <person name="Chapman P."/>
            <person name="Clendenning J."/>
            <person name="Deatherage G."/>
            <person name="Gillet W."/>
            <person name="Grant C."/>
            <person name="Kutyavin T."/>
            <person name="Levy R."/>
            <person name="Li M.-J."/>
            <person name="McClelland E."/>
            <person name="Palmieri A."/>
            <person name="Raymond C."/>
            <person name="Rouse G."/>
            <person name="Saenphimmachak C."/>
            <person name="Wu Z."/>
            <person name="Romero P."/>
            <person name="Gordon D."/>
            <person name="Zhang S."/>
            <person name="Yoo H."/>
            <person name="Tao Y."/>
            <person name="Biddle P."/>
            <person name="Jung M."/>
            <person name="Krespan W."/>
            <person name="Perry M."/>
            <person name="Gordon-Kamm B."/>
            <person name="Liao L."/>
            <person name="Kim S."/>
            <person name="Hendrick C."/>
            <person name="Zhao Z.-Y."/>
            <person name="Dolan M."/>
            <person name="Chumley F."/>
            <person name="Tingey S.V."/>
            <person name="Tomb J.-F."/>
            <person name="Gordon M.P."/>
            <person name="Olson M.V."/>
            <person name="Nester E.W."/>
        </authorList>
    </citation>
    <scope>NUCLEOTIDE SEQUENCE [LARGE SCALE GENOMIC DNA]</scope>
    <source>
        <strain>C58 / ATCC 33970</strain>
    </source>
</reference>
<reference key="2">
    <citation type="journal article" date="2001" name="Science">
        <title>Genome sequence of the plant pathogen and biotechnology agent Agrobacterium tumefaciens C58.</title>
        <authorList>
            <person name="Goodner B."/>
            <person name="Hinkle G."/>
            <person name="Gattung S."/>
            <person name="Miller N."/>
            <person name="Blanchard M."/>
            <person name="Qurollo B."/>
            <person name="Goldman B.S."/>
            <person name="Cao Y."/>
            <person name="Askenazi M."/>
            <person name="Halling C."/>
            <person name="Mullin L."/>
            <person name="Houmiel K."/>
            <person name="Gordon J."/>
            <person name="Vaudin M."/>
            <person name="Iartchouk O."/>
            <person name="Epp A."/>
            <person name="Liu F."/>
            <person name="Wollam C."/>
            <person name="Allinger M."/>
            <person name="Doughty D."/>
            <person name="Scott C."/>
            <person name="Lappas C."/>
            <person name="Markelz B."/>
            <person name="Flanagan C."/>
            <person name="Crowell C."/>
            <person name="Gurson J."/>
            <person name="Lomo C."/>
            <person name="Sear C."/>
            <person name="Strub G."/>
            <person name="Cielo C."/>
            <person name="Slater S."/>
        </authorList>
    </citation>
    <scope>NUCLEOTIDE SEQUENCE [LARGE SCALE GENOMIC DNA]</scope>
    <source>
        <strain>C58 / ATCC 33970</strain>
    </source>
</reference>
<sequence length="171" mass="18951">MATRQSSYNYEEILSCGRGELFGPGNAQLPLPPMLMVHRITEISETGGAFDKGFIRAEYDVSPDDWYFPCHFQGNPIMPGCLGLDGMWQLTGFFLGWLGEEGRGMALSTGEVKFKGMVRPNTKLLQYGIDFKRVMRGRLVLGTADGWLKADGETIYQASDLRVGLSKEKAA</sequence>